<feature type="chain" id="PRO_0000101346" description="Uncharacterized protein RP279">
    <location>
        <begin position="1"/>
        <end position="55"/>
    </location>
</feature>
<proteinExistence type="predicted"/>
<gene>
    <name type="ordered locus">RP279</name>
</gene>
<sequence>MISEIQILIDYNASSLFILCSKLERILSKKQNVRSKAVDNSSLSVVFQNESIIKS</sequence>
<dbReference type="EMBL" id="AJ235271">
    <property type="protein sequence ID" value="CAA14740.1"/>
    <property type="molecule type" value="Genomic_DNA"/>
</dbReference>
<dbReference type="PIR" id="B71683">
    <property type="entry name" value="B71683"/>
</dbReference>
<dbReference type="SMR" id="Q9ZDP8"/>
<dbReference type="EnsemblBacteria" id="CAA14740">
    <property type="protein sequence ID" value="CAA14740"/>
    <property type="gene ID" value="CAA14740"/>
</dbReference>
<dbReference type="KEGG" id="rpr:RP279"/>
<dbReference type="HOGENOM" id="CLU_3029532_0_0_5"/>
<dbReference type="Proteomes" id="UP000002480">
    <property type="component" value="Chromosome"/>
</dbReference>
<protein>
    <recommendedName>
        <fullName>Uncharacterized protein RP279</fullName>
    </recommendedName>
</protein>
<accession>Q9ZDP8</accession>
<name>Y279_RICPR</name>
<reference key="1">
    <citation type="journal article" date="1998" name="Nature">
        <title>The genome sequence of Rickettsia prowazekii and the origin of mitochondria.</title>
        <authorList>
            <person name="Andersson S.G.E."/>
            <person name="Zomorodipour A."/>
            <person name="Andersson J.O."/>
            <person name="Sicheritz-Ponten T."/>
            <person name="Alsmark U.C.M."/>
            <person name="Podowski R.M."/>
            <person name="Naeslund A.K."/>
            <person name="Eriksson A.-S."/>
            <person name="Winkler H.H."/>
            <person name="Kurland C.G."/>
        </authorList>
    </citation>
    <scope>NUCLEOTIDE SEQUENCE [LARGE SCALE GENOMIC DNA]</scope>
    <source>
        <strain>Madrid E</strain>
    </source>
</reference>
<keyword id="KW-1185">Reference proteome</keyword>
<organism>
    <name type="scientific">Rickettsia prowazekii (strain Madrid E)</name>
    <dbReference type="NCBI Taxonomy" id="272947"/>
    <lineage>
        <taxon>Bacteria</taxon>
        <taxon>Pseudomonadati</taxon>
        <taxon>Pseudomonadota</taxon>
        <taxon>Alphaproteobacteria</taxon>
        <taxon>Rickettsiales</taxon>
        <taxon>Rickettsiaceae</taxon>
        <taxon>Rickettsieae</taxon>
        <taxon>Rickettsia</taxon>
        <taxon>typhus group</taxon>
    </lineage>
</organism>